<reference key="1">
    <citation type="journal article" date="2009" name="Environ. Microbiol.">
        <title>The genome of Polaromonas naphthalenivorans strain CJ2, isolated from coal tar-contaminated sediment, reveals physiological and metabolic versatility and evolution through extensive horizontal gene transfer.</title>
        <authorList>
            <person name="Yagi J.M."/>
            <person name="Sims D."/>
            <person name="Brettin T."/>
            <person name="Bruce D."/>
            <person name="Madsen E.L."/>
        </authorList>
    </citation>
    <scope>NUCLEOTIDE SEQUENCE [LARGE SCALE GENOMIC DNA]</scope>
    <source>
        <strain>CJ2</strain>
    </source>
</reference>
<dbReference type="EMBL" id="CP000529">
    <property type="protein sequence ID" value="ABM35535.1"/>
    <property type="molecule type" value="Genomic_DNA"/>
</dbReference>
<dbReference type="RefSeq" id="WP_011799643.1">
    <property type="nucleotide sequence ID" value="NC_008781.1"/>
</dbReference>
<dbReference type="SMR" id="A1VIQ7"/>
<dbReference type="STRING" id="365044.Pnap_0210"/>
<dbReference type="KEGG" id="pna:Pnap_0210"/>
<dbReference type="eggNOG" id="COG0197">
    <property type="taxonomic scope" value="Bacteria"/>
</dbReference>
<dbReference type="HOGENOM" id="CLU_078858_2_1_4"/>
<dbReference type="OrthoDB" id="9802589at2"/>
<dbReference type="Proteomes" id="UP000000644">
    <property type="component" value="Chromosome"/>
</dbReference>
<dbReference type="GO" id="GO:0022625">
    <property type="term" value="C:cytosolic large ribosomal subunit"/>
    <property type="evidence" value="ECO:0007669"/>
    <property type="project" value="TreeGrafter"/>
</dbReference>
<dbReference type="GO" id="GO:0019843">
    <property type="term" value="F:rRNA binding"/>
    <property type="evidence" value="ECO:0007669"/>
    <property type="project" value="UniProtKB-UniRule"/>
</dbReference>
<dbReference type="GO" id="GO:0003735">
    <property type="term" value="F:structural constituent of ribosome"/>
    <property type="evidence" value="ECO:0007669"/>
    <property type="project" value="InterPro"/>
</dbReference>
<dbReference type="GO" id="GO:0000049">
    <property type="term" value="F:tRNA binding"/>
    <property type="evidence" value="ECO:0007669"/>
    <property type="project" value="UniProtKB-KW"/>
</dbReference>
<dbReference type="GO" id="GO:0006412">
    <property type="term" value="P:translation"/>
    <property type="evidence" value="ECO:0007669"/>
    <property type="project" value="UniProtKB-UniRule"/>
</dbReference>
<dbReference type="CDD" id="cd01433">
    <property type="entry name" value="Ribosomal_L16_L10e"/>
    <property type="match status" value="1"/>
</dbReference>
<dbReference type="FunFam" id="3.90.1170.10:FF:000001">
    <property type="entry name" value="50S ribosomal protein L16"/>
    <property type="match status" value="1"/>
</dbReference>
<dbReference type="Gene3D" id="3.90.1170.10">
    <property type="entry name" value="Ribosomal protein L10e/L16"/>
    <property type="match status" value="1"/>
</dbReference>
<dbReference type="HAMAP" id="MF_01342">
    <property type="entry name" value="Ribosomal_uL16"/>
    <property type="match status" value="1"/>
</dbReference>
<dbReference type="InterPro" id="IPR047873">
    <property type="entry name" value="Ribosomal_uL16"/>
</dbReference>
<dbReference type="InterPro" id="IPR000114">
    <property type="entry name" value="Ribosomal_uL16_bact-type"/>
</dbReference>
<dbReference type="InterPro" id="IPR020798">
    <property type="entry name" value="Ribosomal_uL16_CS"/>
</dbReference>
<dbReference type="InterPro" id="IPR016180">
    <property type="entry name" value="Ribosomal_uL16_dom"/>
</dbReference>
<dbReference type="InterPro" id="IPR036920">
    <property type="entry name" value="Ribosomal_uL16_sf"/>
</dbReference>
<dbReference type="NCBIfam" id="TIGR01164">
    <property type="entry name" value="rplP_bact"/>
    <property type="match status" value="1"/>
</dbReference>
<dbReference type="PANTHER" id="PTHR12220">
    <property type="entry name" value="50S/60S RIBOSOMAL PROTEIN L16"/>
    <property type="match status" value="1"/>
</dbReference>
<dbReference type="PANTHER" id="PTHR12220:SF13">
    <property type="entry name" value="LARGE RIBOSOMAL SUBUNIT PROTEIN UL16M"/>
    <property type="match status" value="1"/>
</dbReference>
<dbReference type="Pfam" id="PF00252">
    <property type="entry name" value="Ribosomal_L16"/>
    <property type="match status" value="1"/>
</dbReference>
<dbReference type="PRINTS" id="PR00060">
    <property type="entry name" value="RIBOSOMALL16"/>
</dbReference>
<dbReference type="SUPFAM" id="SSF54686">
    <property type="entry name" value="Ribosomal protein L16p/L10e"/>
    <property type="match status" value="1"/>
</dbReference>
<dbReference type="PROSITE" id="PS00586">
    <property type="entry name" value="RIBOSOMAL_L16_1"/>
    <property type="match status" value="1"/>
</dbReference>
<sequence>MLQPARRKYRKEQKGRNTGVATRGNSVAFGDFGLKCTDRGRLTARQLEAARRAISRHVKRGGRIWIRVFPDKPISQKPAEVRMGNGKGNPEYYVAEIQPGKIVFEIVGVTEELAREAFRLASAKLPLRTTFVSRMIGQ</sequence>
<evidence type="ECO:0000255" key="1">
    <source>
        <dbReference type="HAMAP-Rule" id="MF_01342"/>
    </source>
</evidence>
<evidence type="ECO:0000256" key="2">
    <source>
        <dbReference type="SAM" id="MobiDB-lite"/>
    </source>
</evidence>
<evidence type="ECO:0000305" key="3"/>
<feature type="chain" id="PRO_1000054672" description="Large ribosomal subunit protein uL16">
    <location>
        <begin position="1"/>
        <end position="138"/>
    </location>
</feature>
<feature type="region of interest" description="Disordered" evidence="2">
    <location>
        <begin position="1"/>
        <end position="22"/>
    </location>
</feature>
<feature type="compositionally biased region" description="Basic residues" evidence="2">
    <location>
        <begin position="1"/>
        <end position="13"/>
    </location>
</feature>
<comment type="function">
    <text evidence="1">Binds 23S rRNA and is also seen to make contacts with the A and possibly P site tRNAs.</text>
</comment>
<comment type="subunit">
    <text evidence="1">Part of the 50S ribosomal subunit.</text>
</comment>
<comment type="similarity">
    <text evidence="1">Belongs to the universal ribosomal protein uL16 family.</text>
</comment>
<protein>
    <recommendedName>
        <fullName evidence="1">Large ribosomal subunit protein uL16</fullName>
    </recommendedName>
    <alternativeName>
        <fullName evidence="3">50S ribosomal protein L16</fullName>
    </alternativeName>
</protein>
<keyword id="KW-1185">Reference proteome</keyword>
<keyword id="KW-0687">Ribonucleoprotein</keyword>
<keyword id="KW-0689">Ribosomal protein</keyword>
<keyword id="KW-0694">RNA-binding</keyword>
<keyword id="KW-0699">rRNA-binding</keyword>
<keyword id="KW-0820">tRNA-binding</keyword>
<organism>
    <name type="scientific">Polaromonas naphthalenivorans (strain CJ2)</name>
    <dbReference type="NCBI Taxonomy" id="365044"/>
    <lineage>
        <taxon>Bacteria</taxon>
        <taxon>Pseudomonadati</taxon>
        <taxon>Pseudomonadota</taxon>
        <taxon>Betaproteobacteria</taxon>
        <taxon>Burkholderiales</taxon>
        <taxon>Comamonadaceae</taxon>
        <taxon>Polaromonas</taxon>
    </lineage>
</organism>
<proteinExistence type="inferred from homology"/>
<accession>A1VIQ7</accession>
<gene>
    <name evidence="1" type="primary">rplP</name>
    <name type="ordered locus">Pnap_0210</name>
</gene>
<name>RL16_POLNA</name>